<proteinExistence type="evidence at protein level"/>
<name>BZAA_EUBLI</name>
<evidence type="ECO:0000250" key="1">
    <source>
        <dbReference type="UniProtKB" id="P61425"/>
    </source>
</evidence>
<evidence type="ECO:0000250" key="2">
    <source>
        <dbReference type="UniProtKB" id="Q9A6Q5"/>
    </source>
</evidence>
<evidence type="ECO:0000269" key="3">
    <source>
    </source>
</evidence>
<evidence type="ECO:0000303" key="4">
    <source>
    </source>
</evidence>
<evidence type="ECO:0000305" key="5"/>
<evidence type="ECO:0000305" key="6">
    <source>
    </source>
</evidence>
<evidence type="ECO:0000312" key="7">
    <source>
        <dbReference type="EMBL" id="AKV89410.1"/>
    </source>
</evidence>
<evidence type="ECO:0000312" key="8">
    <source>
        <dbReference type="EMBL" id="SDP52039.1"/>
    </source>
</evidence>
<organism>
    <name type="scientific">Eubacterium limosum</name>
    <dbReference type="NCBI Taxonomy" id="1736"/>
    <lineage>
        <taxon>Bacteria</taxon>
        <taxon>Bacillati</taxon>
        <taxon>Bacillota</taxon>
        <taxon>Clostridia</taxon>
        <taxon>Eubacteriales</taxon>
        <taxon>Eubacteriaceae</taxon>
        <taxon>Eubacterium</taxon>
    </lineage>
</organism>
<dbReference type="EC" id="4.1.99.23" evidence="1 6"/>
<dbReference type="EMBL" id="KT347435">
    <property type="protein sequence ID" value="AKV89410.1"/>
    <property type="molecule type" value="Genomic_DNA"/>
</dbReference>
<dbReference type="EMBL" id="FNJF01000014">
    <property type="protein sequence ID" value="SDP52039.1"/>
    <property type="molecule type" value="Genomic_DNA"/>
</dbReference>
<dbReference type="SMR" id="A0A0K1TPY7"/>
<dbReference type="STRING" id="1736.ACH52_0364"/>
<dbReference type="OrthoDB" id="9805897at2"/>
<dbReference type="UniPathway" id="UPA00148"/>
<dbReference type="GO" id="GO:0051539">
    <property type="term" value="F:4 iron, 4 sulfur cluster binding"/>
    <property type="evidence" value="ECO:0007669"/>
    <property type="project" value="UniProtKB-KW"/>
</dbReference>
<dbReference type="GO" id="GO:0016829">
    <property type="term" value="F:lyase activity"/>
    <property type="evidence" value="ECO:0007669"/>
    <property type="project" value="UniProtKB-KW"/>
</dbReference>
<dbReference type="GO" id="GO:0046872">
    <property type="term" value="F:metal ion binding"/>
    <property type="evidence" value="ECO:0007669"/>
    <property type="project" value="UniProtKB-KW"/>
</dbReference>
<dbReference type="GO" id="GO:0009236">
    <property type="term" value="P:cobalamin biosynthetic process"/>
    <property type="evidence" value="ECO:0007669"/>
    <property type="project" value="UniProtKB-UniPathway"/>
</dbReference>
<dbReference type="GO" id="GO:0009228">
    <property type="term" value="P:thiamine biosynthetic process"/>
    <property type="evidence" value="ECO:0007669"/>
    <property type="project" value="InterPro"/>
</dbReference>
<dbReference type="Gene3D" id="6.10.250.620">
    <property type="match status" value="1"/>
</dbReference>
<dbReference type="Gene3D" id="3.20.20.540">
    <property type="entry name" value="Radical SAM ThiC family, central domain"/>
    <property type="match status" value="1"/>
</dbReference>
<dbReference type="InterPro" id="IPR038521">
    <property type="entry name" value="ThiC/Bza_core_dom"/>
</dbReference>
<dbReference type="InterPro" id="IPR002817">
    <property type="entry name" value="ThiC/BzaA/B"/>
</dbReference>
<dbReference type="NCBIfam" id="NF009895">
    <property type="entry name" value="PRK13352.1"/>
    <property type="match status" value="1"/>
</dbReference>
<dbReference type="NCBIfam" id="TIGR00190">
    <property type="entry name" value="thiC"/>
    <property type="match status" value="1"/>
</dbReference>
<dbReference type="PANTHER" id="PTHR30557:SF1">
    <property type="entry name" value="PHOSPHOMETHYLPYRIMIDINE SYNTHASE, CHLOROPLASTIC"/>
    <property type="match status" value="1"/>
</dbReference>
<dbReference type="PANTHER" id="PTHR30557">
    <property type="entry name" value="THIAMINE BIOSYNTHESIS PROTEIN THIC"/>
    <property type="match status" value="1"/>
</dbReference>
<dbReference type="Pfam" id="PF01964">
    <property type="entry name" value="ThiC_Rad_SAM"/>
    <property type="match status" value="1"/>
</dbReference>
<dbReference type="SFLD" id="SFLDF00407">
    <property type="entry name" value="phosphomethylpyrimidine_syntha"/>
    <property type="match status" value="1"/>
</dbReference>
<dbReference type="SFLD" id="SFLDG01114">
    <property type="entry name" value="phosphomethylpyrimidine_syntha"/>
    <property type="match status" value="1"/>
</dbReference>
<dbReference type="SFLD" id="SFLDS00113">
    <property type="entry name" value="Radical_SAM_Phosphomethylpyrim"/>
    <property type="match status" value="1"/>
</dbReference>
<protein>
    <recommendedName>
        <fullName evidence="6">5-hydroxybenzimidazole synthase BzaA</fullName>
        <shortName evidence="6">5-OHBza synthase</shortName>
        <shortName>HBI synthase</shortName>
        <ecNumber evidence="1 6">4.1.99.23</ecNumber>
    </recommendedName>
</protein>
<comment type="function">
    <text evidence="3">Together with BzaB, catalyzes the conversion of aminoimidazole ribotide (AIR) to 5-hydroxybenzimidazole (5-HBI) in a radical S-adenosyl-L-methionine (SAM)-dependent reaction. Is thus involved in the anaerobic biosynthesis of dimethylbenzimidazole (DMB), the lower axial ligand of vitamin B12 (cobalamin). Requires BzaB for catalytic activity, as BzaA alone displays no activity.</text>
</comment>
<comment type="catalytic activity">
    <reaction evidence="1 6">
        <text>5-amino-1-(5-phospho-beta-D-ribosyl)imidazole + AH2 + S-adenosyl-L-methionine = 5-hydroxybenzimidazole + 5'-deoxyadenosine + formate + L-methionine + A + NH4(+) + phosphate + 2 H(+)</text>
        <dbReference type="Rhea" id="RHEA:53504"/>
        <dbReference type="ChEBI" id="CHEBI:13193"/>
        <dbReference type="ChEBI" id="CHEBI:15378"/>
        <dbReference type="ChEBI" id="CHEBI:15740"/>
        <dbReference type="ChEBI" id="CHEBI:17319"/>
        <dbReference type="ChEBI" id="CHEBI:17499"/>
        <dbReference type="ChEBI" id="CHEBI:28938"/>
        <dbReference type="ChEBI" id="CHEBI:43474"/>
        <dbReference type="ChEBI" id="CHEBI:57844"/>
        <dbReference type="ChEBI" id="CHEBI:59789"/>
        <dbReference type="ChEBI" id="CHEBI:137404"/>
        <dbReference type="ChEBI" id="CHEBI:137981"/>
        <dbReference type="EC" id="4.1.99.23"/>
    </reaction>
</comment>
<comment type="cofactor">
    <cofactor evidence="1">
        <name>[4Fe-4S] cluster</name>
        <dbReference type="ChEBI" id="CHEBI:49883"/>
    </cofactor>
    <text evidence="2">Binds 1 [4Fe-4S] cluster per subunit. The cluster is coordinated with 3 cysteines and an exchangeable S-adenosyl-L-methionine.</text>
</comment>
<comment type="pathway">
    <text evidence="6">Cofactor biosynthesis; adenosylcobalamin biosynthesis.</text>
</comment>
<comment type="similarity">
    <text evidence="5">Belongs to the ThiC family. 5-hydroxybenzimidazole synthase subfamily.</text>
</comment>
<sequence>MTLLEKAKCGEITAEMQYVAEKEGVRPEFICEGVANGDIVILYSSRENIHPVAVGKGLLTKVSASVGMYEEADTVDGEMAKIDAAVKAHADTIMDLSVRGPIEEMREKVLSTVDRPVGTLPMYETLSVAEAKYGTALDMTPDDMFDMIEKQASQGVAFIAVHPGTTLSVIHRAKDEGRIDPLVSYGGSHLIGWMLYNNTENPLYTEFDRLIEICKKYDVVLSFADGMRPGCIADSLDHAQVEELVILGGLVRRAREAGVQVMVKGPGHVPLDEIATTVQLEKKLCYGAPYFVFGCLPTDAAAGYDHITSAIGGAVAAYAGADFLCYVTPAEHIGMPNVDDVYQGVMASRIAAHAGDVAKGHPQAVKWDLDMSVARRAMNWKEQFKLSIDPETAERVWRERSTSFTSECTMCGKYCAMKIVEKYLRAE</sequence>
<reference key="1">
    <citation type="journal article" date="2015" name="Proc. Natl. Acad. Sci. U.S.A.">
        <title>Anaerobic biosynthesis of the lower ligand of vitamin B12.</title>
        <authorList>
            <person name="Hazra A.B."/>
            <person name="Han A.W."/>
            <person name="Mehta A.P."/>
            <person name="Mok K.C."/>
            <person name="Osadchiy V."/>
            <person name="Begley T.P."/>
            <person name="Taga M.E."/>
        </authorList>
    </citation>
    <scope>NUCLEOTIDE SEQUENCE [GENOMIC DNA]</scope>
    <scope>FUNCTION</scope>
    <scope>CATALYTIC ACTIVITY</scope>
    <scope>PATHWAY</scope>
    <source>
        <strain>ATCC 10825 / DSM 20517 / JCM 9976 / NCIMB 9554 / NCTC 10469 / 32_A2</strain>
    </source>
</reference>
<reference key="2">
    <citation type="submission" date="2016-10" db="EMBL/GenBank/DDBJ databases">
        <authorList>
            <person name="Varghese N."/>
        </authorList>
    </citation>
    <scope>NUCLEOTIDE SEQUENCE [LARGE SCALE GENOMIC DNA]</scope>
    <source>
        <strain>ATCC 10825 / DSM 20517 / JCM 9976 / NCIMB 9554 / NCTC 10469 / 32_A2</strain>
    </source>
</reference>
<gene>
    <name evidence="4 7" type="primary">bzaA</name>
    <name evidence="8" type="ORF">SAMN04515624_11454</name>
</gene>
<feature type="chain" id="PRO_0000441745" description="5-hydroxybenzimidazole synthase BzaA">
    <location>
        <begin position="1"/>
        <end position="427"/>
    </location>
</feature>
<keyword id="KW-0004">4Fe-4S</keyword>
<keyword id="KW-0169">Cobalamin biosynthesis</keyword>
<keyword id="KW-0408">Iron</keyword>
<keyword id="KW-0411">Iron-sulfur</keyword>
<keyword id="KW-0456">Lyase</keyword>
<keyword id="KW-0479">Metal-binding</keyword>
<keyword id="KW-0949">S-adenosyl-L-methionine</keyword>
<keyword id="KW-0862">Zinc</keyword>
<accession>A0A0K1TPY7</accession>